<sequence>MATSAAAHGEHAEDHGHDEHAHPTGWRRSTNHKDIGTLYLIFAIIAGVIGAAMSLAIRAELMYPGVEYFHNTHLYNVFVTSHGVIMIFFMVMPAMIGGFGNWFLPLMIGAPDMAFPRMNNISFWLLPASFGLLLMSTFVEGEPGANGAGAGWTMYVPLSSSGHPGPAVDLAIFSLHIAGASSILGAINFITTILNMRAPGMTLHKMPLFAWSVLITAFLLLLSLPVLAGAITMLLTDRNFGTTFFAPEGGGDPLLYQHLFWFFGHPEVYILILPGFGMISHIISTFSRKPVFGYIGMVYAMAAIGGLGFVVWAHHMYIVGMDLDTEAYFVSATMIIAVPTGIKIFSWIATMWGGSIEFATPMLWALAFIFLFTVGGVTGVVLANASLDRVLHDTYYVVAHFHYVLSLGAIFAIFAGWYYWFPKMSGYMYNETLAEAHFWLIFIGVNLIFFPEHFLGISGMPRRYIDYPDAFAGWNLVSSIGSYISGFSVLLFIYCVYDAFAKNVPVGDNPWGAGATTLEWTLPSPPPVHEFEVLPRVE</sequence>
<feature type="chain" id="PRO_0000183447" description="Cytochrome c oxidase subunit 1">
    <location>
        <begin position="1"/>
        <end position="538"/>
    </location>
</feature>
<feature type="transmembrane region" description="Helical" evidence="2">
    <location>
        <begin position="37"/>
        <end position="57"/>
    </location>
</feature>
<feature type="transmembrane region" description="Helical" evidence="2">
    <location>
        <begin position="84"/>
        <end position="104"/>
    </location>
</feature>
<feature type="transmembrane region" description="Helical" evidence="2">
    <location>
        <begin position="121"/>
        <end position="141"/>
    </location>
</feature>
<feature type="transmembrane region" description="Helical" evidence="2">
    <location>
        <begin position="170"/>
        <end position="190"/>
    </location>
</feature>
<feature type="transmembrane region" description="Helical" evidence="2">
    <location>
        <begin position="208"/>
        <end position="228"/>
    </location>
</feature>
<feature type="transmembrane region" description="Helical" evidence="2">
    <location>
        <begin position="259"/>
        <end position="279"/>
    </location>
</feature>
<feature type="transmembrane region" description="Helical" evidence="2">
    <location>
        <begin position="291"/>
        <end position="311"/>
    </location>
</feature>
<feature type="transmembrane region" description="Helical" evidence="2">
    <location>
        <begin position="329"/>
        <end position="349"/>
    </location>
</feature>
<feature type="transmembrane region" description="Helical" evidence="2">
    <location>
        <begin position="362"/>
        <end position="382"/>
    </location>
</feature>
<feature type="transmembrane region" description="Helical" evidence="2">
    <location>
        <begin position="401"/>
        <end position="421"/>
    </location>
</feature>
<feature type="transmembrane region" description="Helical" evidence="2">
    <location>
        <begin position="438"/>
        <end position="458"/>
    </location>
</feature>
<feature type="transmembrane region" description="Helical" evidence="2">
    <location>
        <begin position="476"/>
        <end position="496"/>
    </location>
</feature>
<feature type="region of interest" description="Disordered" evidence="3">
    <location>
        <begin position="1"/>
        <end position="27"/>
    </location>
</feature>
<feature type="compositionally biased region" description="Basic and acidic residues" evidence="3">
    <location>
        <begin position="8"/>
        <end position="22"/>
    </location>
</feature>
<feature type="binding site" description="axial binding residue" evidence="4">
    <location>
        <position position="82"/>
    </location>
    <ligand>
        <name>Fe(II)-heme a</name>
        <dbReference type="ChEBI" id="CHEBI:61715"/>
    </ligand>
    <ligandPart>
        <name>Fe</name>
        <dbReference type="ChEBI" id="CHEBI:18248"/>
    </ligandPart>
</feature>
<feature type="binding site" evidence="4">
    <location>
        <position position="265"/>
    </location>
    <ligand>
        <name>Cu cation</name>
        <dbReference type="ChEBI" id="CHEBI:23378"/>
        <label>B</label>
    </ligand>
</feature>
<feature type="binding site" evidence="4">
    <location>
        <position position="269"/>
    </location>
    <ligand>
        <name>Cu cation</name>
        <dbReference type="ChEBI" id="CHEBI:23378"/>
        <label>B</label>
    </ligand>
</feature>
<feature type="binding site" evidence="4">
    <location>
        <position position="314"/>
    </location>
    <ligand>
        <name>Cu cation</name>
        <dbReference type="ChEBI" id="CHEBI:23378"/>
        <label>B</label>
    </ligand>
</feature>
<feature type="binding site" evidence="4">
    <location>
        <position position="315"/>
    </location>
    <ligand>
        <name>Cu cation</name>
        <dbReference type="ChEBI" id="CHEBI:23378"/>
        <label>B</label>
    </ligand>
</feature>
<feature type="binding site" description="axial binding residue" evidence="4">
    <location>
        <position position="400"/>
    </location>
    <ligand>
        <name>heme a3</name>
        <dbReference type="ChEBI" id="CHEBI:83282"/>
    </ligand>
    <ligandPart>
        <name>Fe</name>
        <dbReference type="ChEBI" id="CHEBI:18248"/>
    </ligandPart>
</feature>
<feature type="binding site" description="axial binding residue" evidence="4">
    <location>
        <position position="402"/>
    </location>
    <ligand>
        <name>Fe(II)-heme a</name>
        <dbReference type="ChEBI" id="CHEBI:61715"/>
    </ligand>
    <ligandPart>
        <name>Fe</name>
        <dbReference type="ChEBI" id="CHEBI:18248"/>
    </ligandPart>
</feature>
<feature type="cross-link" description="1'-histidyl-3'-tyrosine (His-Tyr)" evidence="1">
    <location>
        <begin position="265"/>
        <end position="269"/>
    </location>
</feature>
<proteinExistence type="evidence at transcript level"/>
<protein>
    <recommendedName>
        <fullName>Cytochrome c oxidase subunit 1</fullName>
        <ecNumber>7.1.1.9</ecNumber>
    </recommendedName>
    <alternativeName>
        <fullName>Cytochrome aa3 subunit 1</fullName>
    </alternativeName>
    <alternativeName>
        <fullName>Cytochrome c oxidase polypeptide I</fullName>
    </alternativeName>
</protein>
<accession>Q08855</accession>
<organism>
    <name type="scientific">Rhizobium leguminosarum</name>
    <dbReference type="NCBI Taxonomy" id="384"/>
    <lineage>
        <taxon>Bacteria</taxon>
        <taxon>Pseudomonadati</taxon>
        <taxon>Pseudomonadota</taxon>
        <taxon>Alphaproteobacteria</taxon>
        <taxon>Hyphomicrobiales</taxon>
        <taxon>Rhizobiaceae</taxon>
        <taxon>Rhizobium/Agrobacterium group</taxon>
        <taxon>Rhizobium</taxon>
    </lineage>
</organism>
<keyword id="KW-1003">Cell membrane</keyword>
<keyword id="KW-0186">Copper</keyword>
<keyword id="KW-0249">Electron transport</keyword>
<keyword id="KW-0349">Heme</keyword>
<keyword id="KW-0408">Iron</keyword>
<keyword id="KW-0472">Membrane</keyword>
<keyword id="KW-0479">Metal-binding</keyword>
<keyword id="KW-0679">Respiratory chain</keyword>
<keyword id="KW-1278">Translocase</keyword>
<keyword id="KW-0812">Transmembrane</keyword>
<keyword id="KW-1133">Transmembrane helix</keyword>
<keyword id="KW-0813">Transport</keyword>
<name>COX1_RHILE</name>
<evidence type="ECO:0000250" key="1"/>
<evidence type="ECO:0000255" key="2"/>
<evidence type="ECO:0000256" key="3">
    <source>
        <dbReference type="SAM" id="MobiDB-lite"/>
    </source>
</evidence>
<evidence type="ECO:0000305" key="4"/>
<reference key="1">
    <citation type="journal article" date="1994" name="Appl. Environ. Microbiol.">
        <title>Cytochrome aa3 gene regulation in members of the family Rhizobiaceae: comparison of copper and oxygen effects in Bradyrhizobium japonicum and Rhizobium tropici.</title>
        <authorList>
            <person name="Gabel C."/>
            <person name="Bittinger M.A."/>
            <person name="Maier R.J."/>
        </authorList>
    </citation>
    <scope>NUCLEOTIDE SEQUENCE [GENOMIC DNA]</scope>
</reference>
<comment type="function">
    <text>Cytochrome c oxidase is the component of the respiratory chain that catalyzes the reduction of oxygen to water. Subunits 1-3 form the functional core of the enzyme complex. CO I is the catalytic subunit of the enzyme. Electrons originating in cytochrome c are transferred via the copper A center of subunit 2 and heme A of subunit 1 to the bimetallic center formed by heme A3 and copper B.</text>
</comment>
<comment type="catalytic activity">
    <reaction>
        <text>4 Fe(II)-[cytochrome c] + O2 + 8 H(+)(in) = 4 Fe(III)-[cytochrome c] + 2 H2O + 4 H(+)(out)</text>
        <dbReference type="Rhea" id="RHEA:11436"/>
        <dbReference type="Rhea" id="RHEA-COMP:10350"/>
        <dbReference type="Rhea" id="RHEA-COMP:14399"/>
        <dbReference type="ChEBI" id="CHEBI:15377"/>
        <dbReference type="ChEBI" id="CHEBI:15378"/>
        <dbReference type="ChEBI" id="CHEBI:15379"/>
        <dbReference type="ChEBI" id="CHEBI:29033"/>
        <dbReference type="ChEBI" id="CHEBI:29034"/>
        <dbReference type="EC" id="7.1.1.9"/>
    </reaction>
</comment>
<comment type="pathway">
    <text>Energy metabolism; oxidative phosphorylation.</text>
</comment>
<comment type="subcellular location">
    <subcellularLocation>
        <location>Cell membrane</location>
        <topology>Multi-pass membrane protein</topology>
    </subcellularLocation>
</comment>
<comment type="developmental stage">
    <text>Free in soil (not as bacteroid).</text>
</comment>
<comment type="similarity">
    <text evidence="4">Belongs to the heme-copper respiratory oxidase family.</text>
</comment>
<dbReference type="EC" id="7.1.1.9"/>
<dbReference type="EMBL" id="X74341">
    <property type="protein sequence ID" value="CAA52388.1"/>
    <property type="molecule type" value="Genomic_DNA"/>
</dbReference>
<dbReference type="PIR" id="S36424">
    <property type="entry name" value="S36424"/>
</dbReference>
<dbReference type="SMR" id="Q08855"/>
<dbReference type="UniPathway" id="UPA00705"/>
<dbReference type="GO" id="GO:0005886">
    <property type="term" value="C:plasma membrane"/>
    <property type="evidence" value="ECO:0007669"/>
    <property type="project" value="UniProtKB-SubCell"/>
</dbReference>
<dbReference type="GO" id="GO:0045277">
    <property type="term" value="C:respiratory chain complex IV"/>
    <property type="evidence" value="ECO:0007669"/>
    <property type="project" value="InterPro"/>
</dbReference>
<dbReference type="GO" id="GO:0004129">
    <property type="term" value="F:cytochrome-c oxidase activity"/>
    <property type="evidence" value="ECO:0007669"/>
    <property type="project" value="UniProtKB-EC"/>
</dbReference>
<dbReference type="GO" id="GO:0020037">
    <property type="term" value="F:heme binding"/>
    <property type="evidence" value="ECO:0007669"/>
    <property type="project" value="InterPro"/>
</dbReference>
<dbReference type="GO" id="GO:0046872">
    <property type="term" value="F:metal ion binding"/>
    <property type="evidence" value="ECO:0007669"/>
    <property type="project" value="UniProtKB-KW"/>
</dbReference>
<dbReference type="GO" id="GO:0015990">
    <property type="term" value="P:electron transport coupled proton transport"/>
    <property type="evidence" value="ECO:0007669"/>
    <property type="project" value="InterPro"/>
</dbReference>
<dbReference type="GO" id="GO:0006119">
    <property type="term" value="P:oxidative phosphorylation"/>
    <property type="evidence" value="ECO:0007669"/>
    <property type="project" value="UniProtKB-UniPathway"/>
</dbReference>
<dbReference type="GO" id="GO:0022904">
    <property type="term" value="P:respiratory electron transport chain"/>
    <property type="evidence" value="ECO:0007669"/>
    <property type="project" value="TreeGrafter"/>
</dbReference>
<dbReference type="CDD" id="cd01663">
    <property type="entry name" value="Cyt_c_Oxidase_I"/>
    <property type="match status" value="1"/>
</dbReference>
<dbReference type="FunFam" id="1.20.210.10:FF:000001">
    <property type="entry name" value="Cytochrome c oxidase subunit 1"/>
    <property type="match status" value="1"/>
</dbReference>
<dbReference type="Gene3D" id="1.20.210.10">
    <property type="entry name" value="Cytochrome c oxidase-like, subunit I domain"/>
    <property type="match status" value="1"/>
</dbReference>
<dbReference type="InterPro" id="IPR023616">
    <property type="entry name" value="Cyt_c_oxase-like_su1_dom"/>
</dbReference>
<dbReference type="InterPro" id="IPR036927">
    <property type="entry name" value="Cyt_c_oxase-like_su1_sf"/>
</dbReference>
<dbReference type="InterPro" id="IPR000883">
    <property type="entry name" value="Cyt_C_Oxase_1"/>
</dbReference>
<dbReference type="InterPro" id="IPR023615">
    <property type="entry name" value="Cyt_c_Oxase_su1_BS"/>
</dbReference>
<dbReference type="InterPro" id="IPR033944">
    <property type="entry name" value="Cyt_c_oxase_su1_dom"/>
</dbReference>
<dbReference type="InterPro" id="IPR014241">
    <property type="entry name" value="Cyt_c_oxidase_su1_bac"/>
</dbReference>
<dbReference type="NCBIfam" id="TIGR02891">
    <property type="entry name" value="CtaD_CoxA"/>
    <property type="match status" value="1"/>
</dbReference>
<dbReference type="PANTHER" id="PTHR10422">
    <property type="entry name" value="CYTOCHROME C OXIDASE SUBUNIT 1"/>
    <property type="match status" value="1"/>
</dbReference>
<dbReference type="PANTHER" id="PTHR10422:SF18">
    <property type="entry name" value="CYTOCHROME C OXIDASE SUBUNIT 1"/>
    <property type="match status" value="1"/>
</dbReference>
<dbReference type="Pfam" id="PF00115">
    <property type="entry name" value="COX1"/>
    <property type="match status" value="1"/>
</dbReference>
<dbReference type="PRINTS" id="PR01165">
    <property type="entry name" value="CYCOXIDASEI"/>
</dbReference>
<dbReference type="SUPFAM" id="SSF81442">
    <property type="entry name" value="Cytochrome c oxidase subunit I-like"/>
    <property type="match status" value="1"/>
</dbReference>
<dbReference type="PROSITE" id="PS50855">
    <property type="entry name" value="COX1"/>
    <property type="match status" value="1"/>
</dbReference>
<dbReference type="PROSITE" id="PS00077">
    <property type="entry name" value="COX1_CUB"/>
    <property type="match status" value="1"/>
</dbReference>
<gene>
    <name type="primary">ctaD</name>
    <name type="synonym">coxA</name>
</gene>